<sequence>MLGAELADTGLFVRFGALHFAIASVAVLLSALFVLLPFALPRLLAHKNLARAGVAILFLRLGLMLCGTLLDGRSWRNELPFHLCPAALISGSLYFITRRPIFFNLLYFWHFGSFVAVLYPDLTRAHTILYAYLFMLTHCLEPAMVVFSLLHLRERISKRGLQCAVLGFLLLAANALFWNRRLGANYLFISKYPLEILRVIRPFFVYQLLFVSALCLLMLVLYLPFRPSQHGRNQLFVI</sequence>
<keyword id="KW-1003">Cell membrane</keyword>
<keyword id="KW-0472">Membrane</keyword>
<keyword id="KW-1185">Reference proteome</keyword>
<keyword id="KW-0812">Transmembrane</keyword>
<keyword id="KW-1133">Transmembrane helix</keyword>
<organism>
    <name type="scientific">Treponema pallidum (strain Nichols)</name>
    <dbReference type="NCBI Taxonomy" id="243276"/>
    <lineage>
        <taxon>Bacteria</taxon>
        <taxon>Pseudomonadati</taxon>
        <taxon>Spirochaetota</taxon>
        <taxon>Spirochaetia</taxon>
        <taxon>Spirochaetales</taxon>
        <taxon>Treponemataceae</taxon>
        <taxon>Treponema</taxon>
    </lineage>
</organism>
<evidence type="ECO:0000255" key="1"/>
<evidence type="ECO:0000305" key="2"/>
<gene>
    <name type="ordered locus">TP_0381</name>
</gene>
<feature type="chain" id="PRO_0000202246" description="Uncharacterized protein TP_0381">
    <location>
        <begin position="1"/>
        <end position="238"/>
    </location>
</feature>
<feature type="transmembrane region" description="Helical" evidence="1">
    <location>
        <begin position="15"/>
        <end position="37"/>
    </location>
</feature>
<feature type="transmembrane region" description="Helical" evidence="1">
    <location>
        <begin position="50"/>
        <end position="69"/>
    </location>
</feature>
<feature type="transmembrane region" description="Helical" evidence="1">
    <location>
        <begin position="79"/>
        <end position="96"/>
    </location>
</feature>
<feature type="transmembrane region" description="Helical" evidence="1">
    <location>
        <begin position="101"/>
        <end position="118"/>
    </location>
</feature>
<feature type="transmembrane region" description="Helical" evidence="1">
    <location>
        <begin position="128"/>
        <end position="150"/>
    </location>
</feature>
<feature type="transmembrane region" description="Helical" evidence="1">
    <location>
        <begin position="163"/>
        <end position="183"/>
    </location>
</feature>
<feature type="transmembrane region" description="Helical" evidence="1">
    <location>
        <begin position="203"/>
        <end position="225"/>
    </location>
</feature>
<name>Y381_TREPA</name>
<protein>
    <recommendedName>
        <fullName>Uncharacterized protein TP_0381</fullName>
    </recommendedName>
</protein>
<accession>O83396</accession>
<reference key="1">
    <citation type="journal article" date="1998" name="Science">
        <title>Complete genome sequence of Treponema pallidum, the syphilis spirochete.</title>
        <authorList>
            <person name="Fraser C.M."/>
            <person name="Norris S.J."/>
            <person name="Weinstock G.M."/>
            <person name="White O."/>
            <person name="Sutton G.G."/>
            <person name="Dodson R.J."/>
            <person name="Gwinn M.L."/>
            <person name="Hickey E.K."/>
            <person name="Clayton R.A."/>
            <person name="Ketchum K.A."/>
            <person name="Sodergren E."/>
            <person name="Hardham J.M."/>
            <person name="McLeod M.P."/>
            <person name="Salzberg S.L."/>
            <person name="Peterson J.D."/>
            <person name="Khalak H.G."/>
            <person name="Richardson D.L."/>
            <person name="Howell J.K."/>
            <person name="Chidambaram M."/>
            <person name="Utterback T.R."/>
            <person name="McDonald L.A."/>
            <person name="Artiach P."/>
            <person name="Bowman C."/>
            <person name="Cotton M.D."/>
            <person name="Fujii C."/>
            <person name="Garland S.A."/>
            <person name="Hatch B."/>
            <person name="Horst K."/>
            <person name="Roberts K.M."/>
            <person name="Sandusky M."/>
            <person name="Weidman J.F."/>
            <person name="Smith H.O."/>
            <person name="Venter J.C."/>
        </authorList>
    </citation>
    <scope>NUCLEOTIDE SEQUENCE [LARGE SCALE GENOMIC DNA]</scope>
    <source>
        <strain>Nichols</strain>
    </source>
</reference>
<comment type="subcellular location">
    <subcellularLocation>
        <location evidence="2">Cell membrane</location>
        <topology evidence="2">Multi-pass membrane protein</topology>
    </subcellularLocation>
</comment>
<dbReference type="EMBL" id="AE000520">
    <property type="protein sequence ID" value="AAC65382.1"/>
    <property type="molecule type" value="Genomic_DNA"/>
</dbReference>
<dbReference type="PIR" id="G71330">
    <property type="entry name" value="G71330"/>
</dbReference>
<dbReference type="RefSeq" id="WP_010881829.1">
    <property type="nucleotide sequence ID" value="NC_021490.2"/>
</dbReference>
<dbReference type="IntAct" id="O83396">
    <property type="interactions" value="1"/>
</dbReference>
<dbReference type="STRING" id="243276.TP_0381"/>
<dbReference type="EnsemblBacteria" id="AAC65382">
    <property type="protein sequence ID" value="AAC65382"/>
    <property type="gene ID" value="TP_0381"/>
</dbReference>
<dbReference type="KEGG" id="tpa:TP_0381"/>
<dbReference type="KEGG" id="tpw:TPANIC_0381"/>
<dbReference type="eggNOG" id="COG5522">
    <property type="taxonomic scope" value="Bacteria"/>
</dbReference>
<dbReference type="HOGENOM" id="CLU_088526_2_0_12"/>
<dbReference type="OrthoDB" id="95357at2"/>
<dbReference type="Proteomes" id="UP000000811">
    <property type="component" value="Chromosome"/>
</dbReference>
<dbReference type="GO" id="GO:0005886">
    <property type="term" value="C:plasma membrane"/>
    <property type="evidence" value="ECO:0007669"/>
    <property type="project" value="UniProtKB-SubCell"/>
</dbReference>
<dbReference type="InterPro" id="IPR011737">
    <property type="entry name" value="CHP02206_TP0381"/>
</dbReference>
<dbReference type="NCBIfam" id="TIGR02206">
    <property type="entry name" value="intg_mem_TP0381"/>
    <property type="match status" value="1"/>
</dbReference>
<dbReference type="Pfam" id="PF14808">
    <property type="entry name" value="TMEM164"/>
    <property type="match status" value="1"/>
</dbReference>
<proteinExistence type="predicted"/>